<accession>Q9FPP7</accession>
<evidence type="ECO:0000250" key="1">
    <source>
        <dbReference type="UniProtKB" id="Q9FPP8"/>
    </source>
</evidence>
<evidence type="ECO:0000255" key="2"/>
<evidence type="ECO:0000269" key="3">
    <source>
    </source>
</evidence>
<evidence type="ECO:0000303" key="4">
    <source>
    </source>
</evidence>
<evidence type="ECO:0000305" key="5"/>
<evidence type="ECO:0000312" key="6">
    <source>
        <dbReference type="EMBL" id="AAG42260.1"/>
    </source>
</evidence>
<organism evidence="6">
    <name type="scientific">Calendula officinalis</name>
    <name type="common">Pot marigold</name>
    <dbReference type="NCBI Taxonomy" id="41496"/>
    <lineage>
        <taxon>Eukaryota</taxon>
        <taxon>Viridiplantae</taxon>
        <taxon>Streptophyta</taxon>
        <taxon>Embryophyta</taxon>
        <taxon>Tracheophyta</taxon>
        <taxon>Spermatophyta</taxon>
        <taxon>Magnoliopsida</taxon>
        <taxon>eudicotyledons</taxon>
        <taxon>Gunneridae</taxon>
        <taxon>Pentapetalae</taxon>
        <taxon>asterids</taxon>
        <taxon>campanulids</taxon>
        <taxon>Asterales</taxon>
        <taxon>Asteraceae</taxon>
        <taxon>Asteroideae</taxon>
        <taxon>Calenduleae</taxon>
        <taxon>Calendula</taxon>
    </lineage>
</organism>
<protein>
    <recommendedName>
        <fullName evidence="5">Fatty acid conjugase FAC2 B</fullName>
        <shortName evidence="5">CoFac2</shortName>
        <ecNumber evidence="3">1.14.19.14</ecNumber>
    </recommendedName>
    <alternativeName>
        <fullName evidence="4">CoFadX-1</fullName>
    </alternativeName>
</protein>
<reference key="1">
    <citation type="journal article" date="2001" name="J. Biol. Chem.">
        <title>Formation of conjugated delta8,delta10-double bonds by delta12-oleic-acid desaturase-related enzymes: biosynthetic origin of calendic acid.</title>
        <authorList>
            <person name="Cahoon E.B."/>
            <person name="Ripp K.G."/>
            <person name="Hall S.E."/>
            <person name="Kinney A.J."/>
        </authorList>
    </citation>
    <scope>NUCLEOTIDE SEQUENCE [MRNA]</scope>
    <scope>FUNCTION</scope>
    <scope>CATALYTIC ACTIVITY</scope>
    <scope>TISSUE SPECIFICITY</scope>
    <scope>SUBCELLULAR LOCATION</scope>
</reference>
<comment type="function">
    <text evidence="1 3">Fatty acid conjugase converting 18:2(9Z, 12Z) to calendic acid 18:3(8E, 10E, 12Z) (PubMed:11067856). Converts alpha-linolenic acid (18:3(9Z, 12Z, 15Z)) into 18:4(8E, 10E, 12Z, 15Z) (PubMed:11067856). Also has weak activity on the mono-unsaturates 16:1(9Z) and 18:1(9Z) producing two conjugated double bonds at delta(8) and delta(10) position (By similarity).</text>
</comment>
<comment type="catalytic activity">
    <reaction evidence="3">
        <text>a (9Z,12Z)-octadecadienoyl-containing glycerolipid + AH2 + O2 = a (8E,10E,12Z)-octadecatrienoyl-containing glycerolipid + A + 2 H2O</text>
        <dbReference type="Rhea" id="RHEA:46440"/>
        <dbReference type="ChEBI" id="CHEBI:13193"/>
        <dbReference type="ChEBI" id="CHEBI:15377"/>
        <dbReference type="ChEBI" id="CHEBI:15379"/>
        <dbReference type="ChEBI" id="CHEBI:17499"/>
        <dbReference type="ChEBI" id="CHEBI:88257"/>
        <dbReference type="ChEBI" id="CHEBI:88351"/>
        <dbReference type="EC" id="1.14.19.14"/>
    </reaction>
</comment>
<comment type="pathway">
    <text>Lipid metabolism; polyunsaturated fatty acid biosynthesis.</text>
</comment>
<comment type="subcellular location">
    <subcellularLocation>
        <location evidence="3">Microsome membrane</location>
        <topology evidence="2">Multi-pass membrane protein</topology>
    </subcellularLocation>
</comment>
<comment type="tissue specificity">
    <text evidence="3">Expressed exclusively in the developing seeds. Not detected in leaves.</text>
</comment>
<comment type="domain">
    <text evidence="5">The histidine box domains may contain the active site and/or be involved in metal ion binding.</text>
</comment>
<comment type="similarity">
    <text evidence="5">Belongs to the fatty acid desaturase type 1 family.</text>
</comment>
<gene>
    <name evidence="5" type="primary">FAC2A</name>
</gene>
<proteinExistence type="evidence at protein level"/>
<feature type="chain" id="PRO_0000435419" description="Fatty acid conjugase FAC2 B">
    <location>
        <begin position="1"/>
        <end position="372"/>
    </location>
</feature>
<feature type="transmembrane region" description="Helical" evidence="2">
    <location>
        <begin position="44"/>
        <end position="64"/>
    </location>
</feature>
<feature type="transmembrane region" description="Helical" evidence="2">
    <location>
        <begin position="74"/>
        <end position="94"/>
    </location>
</feature>
<feature type="transmembrane region" description="Helical" evidence="2">
    <location>
        <begin position="166"/>
        <end position="186"/>
    </location>
</feature>
<feature type="transmembrane region" description="Helical" evidence="2">
    <location>
        <begin position="217"/>
        <end position="237"/>
    </location>
</feature>
<feature type="transmembrane region" description="Helical" evidence="2">
    <location>
        <begin position="240"/>
        <end position="260"/>
    </location>
</feature>
<feature type="short sequence motif" description="Histidine box-1" evidence="5">
    <location>
        <begin position="95"/>
        <end position="99"/>
    </location>
</feature>
<feature type="short sequence motif" description="Histidine box-2" evidence="5">
    <location>
        <begin position="131"/>
        <end position="135"/>
    </location>
</feature>
<feature type="short sequence motif" description="Histidine box-3" evidence="5">
    <location>
        <begin position="304"/>
        <end position="308"/>
    </location>
</feature>
<keyword id="KW-0256">Endoplasmic reticulum</keyword>
<keyword id="KW-0275">Fatty acid biosynthesis</keyword>
<keyword id="KW-0276">Fatty acid metabolism</keyword>
<keyword id="KW-0444">Lipid biosynthesis</keyword>
<keyword id="KW-0443">Lipid metabolism</keyword>
<keyword id="KW-0472">Membrane</keyword>
<keyword id="KW-0492">Microsome</keyword>
<keyword id="KW-0560">Oxidoreductase</keyword>
<keyword id="KW-0812">Transmembrane</keyword>
<keyword id="KW-1133">Transmembrane helix</keyword>
<sequence>MGKAASAKKVLERVPISKPPFEYNDLKKAVPPHCFSRPLSRSLYFLFHDIIVTCILFYVASNYIHMLPRFLSCIVWPVYWISQGVFLGRLWMIGHECGHHSFSNYRWVDDTVGFLIHTATLTPYFSFKYSHRNHHAHTNSMEYDEVHIPKRKSEALYFEFLGNNPIGLMITMLCKLTFGYAAYIMFNYTGKKHKSGGLASHFYPQSPLFNDSERNHVLFSDIGICIVLYACYRIVTVTGAMPAFYVYGIPWVIMSAILFAATYLQHTHPSIPHYDTTEWNWLRGALSTIDRDLGFFNMNKTHYHVIHHLFPVIPEYHAQEATEAIKPILGQYYKYDGTPFLKALWREMKECIYVESDEGQKKQGIYWFKNKT</sequence>
<name>FAC2B_CALOF</name>
<dbReference type="EC" id="1.14.19.14" evidence="3"/>
<dbReference type="EMBL" id="AF310156">
    <property type="protein sequence ID" value="AAG42260.1"/>
    <property type="molecule type" value="mRNA"/>
</dbReference>
<dbReference type="KEGG" id="ag:AAG42260"/>
<dbReference type="BRENDA" id="1.14.19.14">
    <property type="organism ID" value="13728"/>
</dbReference>
<dbReference type="UniPathway" id="UPA00658"/>
<dbReference type="GO" id="GO:0005783">
    <property type="term" value="C:endoplasmic reticulum"/>
    <property type="evidence" value="ECO:0007669"/>
    <property type="project" value="UniProtKB-KW"/>
</dbReference>
<dbReference type="GO" id="GO:0016020">
    <property type="term" value="C:membrane"/>
    <property type="evidence" value="ECO:0007669"/>
    <property type="project" value="UniProtKB-KW"/>
</dbReference>
<dbReference type="GO" id="GO:0016717">
    <property type="term" value="F:oxidoreductase activity, acting on paired donors, with oxidation of a pair of donors resulting in the reduction of molecular oxygen to two molecules of water"/>
    <property type="evidence" value="ECO:0000314"/>
    <property type="project" value="UniProtKB"/>
</dbReference>
<dbReference type="GO" id="GO:0036109">
    <property type="term" value="P:alpha-linolenic acid metabolic process"/>
    <property type="evidence" value="ECO:0000314"/>
    <property type="project" value="UniProtKB"/>
</dbReference>
<dbReference type="GO" id="GO:0006636">
    <property type="term" value="P:unsaturated fatty acid biosynthetic process"/>
    <property type="evidence" value="ECO:0000314"/>
    <property type="project" value="UniProtKB"/>
</dbReference>
<dbReference type="CDD" id="cd03507">
    <property type="entry name" value="Delta12-FADS-like"/>
    <property type="match status" value="1"/>
</dbReference>
<dbReference type="InterPro" id="IPR005804">
    <property type="entry name" value="FA_desaturase_dom"/>
</dbReference>
<dbReference type="InterPro" id="IPR012171">
    <property type="entry name" value="Fatty_acid_desaturase"/>
</dbReference>
<dbReference type="PANTHER" id="PTHR32100">
    <property type="entry name" value="OMEGA-6 FATTY ACID DESATURASE, CHLOROPLASTIC"/>
    <property type="match status" value="1"/>
</dbReference>
<dbReference type="Pfam" id="PF00487">
    <property type="entry name" value="FA_desaturase"/>
    <property type="match status" value="1"/>
</dbReference>